<organism>
    <name type="scientific">Enterococcus faecalis (strain ATCC 700802 / V583)</name>
    <dbReference type="NCBI Taxonomy" id="226185"/>
    <lineage>
        <taxon>Bacteria</taxon>
        <taxon>Bacillati</taxon>
        <taxon>Bacillota</taxon>
        <taxon>Bacilli</taxon>
        <taxon>Lactobacillales</taxon>
        <taxon>Enterococcaceae</taxon>
        <taxon>Enterococcus</taxon>
    </lineage>
</organism>
<keyword id="KW-0274">FAD</keyword>
<keyword id="KW-0285">Flavoprotein</keyword>
<keyword id="KW-0521">NADP</keyword>
<keyword id="KW-0560">Oxidoreductase</keyword>
<keyword id="KW-1185">Reference proteome</keyword>
<gene>
    <name type="ordered locus">EF_2899</name>
</gene>
<accession>Q82ZZ8</accession>
<proteinExistence type="inferred from homology"/>
<reference key="1">
    <citation type="journal article" date="2003" name="Science">
        <title>Role of mobile DNA in the evolution of vancomycin-resistant Enterococcus faecalis.</title>
        <authorList>
            <person name="Paulsen I.T."/>
            <person name="Banerjei L."/>
            <person name="Myers G.S.A."/>
            <person name="Nelson K.E."/>
            <person name="Seshadri R."/>
            <person name="Read T.D."/>
            <person name="Fouts D.E."/>
            <person name="Eisen J.A."/>
            <person name="Gill S.R."/>
            <person name="Heidelberg J.F."/>
            <person name="Tettelin H."/>
            <person name="Dodson R.J."/>
            <person name="Umayam L.A."/>
            <person name="Brinkac L.M."/>
            <person name="Beanan M.J."/>
            <person name="Daugherty S.C."/>
            <person name="DeBoy R.T."/>
            <person name="Durkin S.A."/>
            <person name="Kolonay J.F."/>
            <person name="Madupu R."/>
            <person name="Nelson W.C."/>
            <person name="Vamathevan J.J."/>
            <person name="Tran B."/>
            <person name="Upton J."/>
            <person name="Hansen T."/>
            <person name="Shetty J."/>
            <person name="Khouri H.M."/>
            <person name="Utterback T.R."/>
            <person name="Radune D."/>
            <person name="Ketchum K.A."/>
            <person name="Dougherty B.A."/>
            <person name="Fraser C.M."/>
        </authorList>
    </citation>
    <scope>NUCLEOTIDE SEQUENCE [LARGE SCALE GENOMIC DNA]</scope>
    <source>
        <strain>ATCC 700802 / V583</strain>
    </source>
</reference>
<name>FENR_ENTFA</name>
<sequence length="336" mass="37098">MSDEKDIYDLTIIGGGPVGLFAAFYAGIRKAKTKIIDSLPQLGGQLTMLYPEKYIYDIPGFPAIKAGELIANLEKQMQPFQHDVCLEEEVTHLAQEADGLLRLDTTKGTHYSKTVIFAIGNGAFQPRRLAIENVEAFEGESIHYYVTDMKKFAGKKVAIAGGGDSAIDWALMLENVAEEVSIIHRRPQFRGHEHSVEQLEKSSVSIRTPYIISDILKENETFTGIQLTETKGDQTLDLPLDDLIINYGFTSSLTHLKEWGLDVSRNAINVHSDMSTNIPGVYAVGDICSYEGKVKLIATGFGEAPTAVNNALHYLRPDARRQPVHSTSLFENGVPK</sequence>
<evidence type="ECO:0000255" key="1">
    <source>
        <dbReference type="HAMAP-Rule" id="MF_01685"/>
    </source>
</evidence>
<protein>
    <recommendedName>
        <fullName evidence="1">Ferredoxin--NADP reductase</fullName>
        <shortName evidence="1">FNR</shortName>
        <shortName evidence="1">Fd-NADP(+) reductase</shortName>
        <ecNumber evidence="1">1.18.1.2</ecNumber>
    </recommendedName>
</protein>
<feature type="chain" id="PRO_0000364833" description="Ferredoxin--NADP reductase">
    <location>
        <begin position="1"/>
        <end position="336"/>
    </location>
</feature>
<feature type="binding site" evidence="1">
    <location>
        <position position="37"/>
    </location>
    <ligand>
        <name>FAD</name>
        <dbReference type="ChEBI" id="CHEBI:57692"/>
    </ligand>
</feature>
<feature type="binding site" evidence="1">
    <location>
        <position position="45"/>
    </location>
    <ligand>
        <name>FAD</name>
        <dbReference type="ChEBI" id="CHEBI:57692"/>
    </ligand>
</feature>
<feature type="binding site" evidence="1">
    <location>
        <position position="50"/>
    </location>
    <ligand>
        <name>FAD</name>
        <dbReference type="ChEBI" id="CHEBI:57692"/>
    </ligand>
</feature>
<feature type="binding site" evidence="1">
    <location>
        <position position="90"/>
    </location>
    <ligand>
        <name>FAD</name>
        <dbReference type="ChEBI" id="CHEBI:57692"/>
    </ligand>
</feature>
<feature type="binding site" evidence="1">
    <location>
        <position position="124"/>
    </location>
    <ligand>
        <name>FAD</name>
        <dbReference type="ChEBI" id="CHEBI:57692"/>
    </ligand>
</feature>
<feature type="binding site" evidence="1">
    <location>
        <position position="286"/>
    </location>
    <ligand>
        <name>FAD</name>
        <dbReference type="ChEBI" id="CHEBI:57692"/>
    </ligand>
</feature>
<feature type="binding site" evidence="1">
    <location>
        <position position="327"/>
    </location>
    <ligand>
        <name>FAD</name>
        <dbReference type="ChEBI" id="CHEBI:57692"/>
    </ligand>
</feature>
<dbReference type="EC" id="1.18.1.2" evidence="1"/>
<dbReference type="EMBL" id="AE016830">
    <property type="protein sequence ID" value="AAO82587.1"/>
    <property type="molecule type" value="Genomic_DNA"/>
</dbReference>
<dbReference type="RefSeq" id="NP_816517.1">
    <property type="nucleotide sequence ID" value="NC_004668.1"/>
</dbReference>
<dbReference type="RefSeq" id="WP_002368301.1">
    <property type="nucleotide sequence ID" value="NZ_KE136524.1"/>
</dbReference>
<dbReference type="SMR" id="Q82ZZ8"/>
<dbReference type="STRING" id="226185.EF_2899"/>
<dbReference type="EnsemblBacteria" id="AAO82587">
    <property type="protein sequence ID" value="AAO82587"/>
    <property type="gene ID" value="EF_2899"/>
</dbReference>
<dbReference type="KEGG" id="efa:EF2899"/>
<dbReference type="PATRIC" id="fig|226185.45.peg.676"/>
<dbReference type="eggNOG" id="COG0492">
    <property type="taxonomic scope" value="Bacteria"/>
</dbReference>
<dbReference type="HOGENOM" id="CLU_031864_5_5_9"/>
<dbReference type="Proteomes" id="UP000001415">
    <property type="component" value="Chromosome"/>
</dbReference>
<dbReference type="GO" id="GO:0004324">
    <property type="term" value="F:ferredoxin-NADP+ reductase activity"/>
    <property type="evidence" value="ECO:0007669"/>
    <property type="project" value="UniProtKB-UniRule"/>
</dbReference>
<dbReference type="GO" id="GO:0050660">
    <property type="term" value="F:flavin adenine dinucleotide binding"/>
    <property type="evidence" value="ECO:0007669"/>
    <property type="project" value="UniProtKB-UniRule"/>
</dbReference>
<dbReference type="GO" id="GO:0050661">
    <property type="term" value="F:NADP binding"/>
    <property type="evidence" value="ECO:0007669"/>
    <property type="project" value="UniProtKB-UniRule"/>
</dbReference>
<dbReference type="Gene3D" id="3.50.50.60">
    <property type="entry name" value="FAD/NAD(P)-binding domain"/>
    <property type="match status" value="2"/>
</dbReference>
<dbReference type="HAMAP" id="MF_01685">
    <property type="entry name" value="FENR2"/>
    <property type="match status" value="1"/>
</dbReference>
<dbReference type="InterPro" id="IPR036188">
    <property type="entry name" value="FAD/NAD-bd_sf"/>
</dbReference>
<dbReference type="InterPro" id="IPR023753">
    <property type="entry name" value="FAD/NAD-binding_dom"/>
</dbReference>
<dbReference type="InterPro" id="IPR022890">
    <property type="entry name" value="Fd--NADP_Rdtase_type_2"/>
</dbReference>
<dbReference type="InterPro" id="IPR050097">
    <property type="entry name" value="Ferredoxin-NADP_redctase_2"/>
</dbReference>
<dbReference type="PANTHER" id="PTHR48105">
    <property type="entry name" value="THIOREDOXIN REDUCTASE 1-RELATED-RELATED"/>
    <property type="match status" value="1"/>
</dbReference>
<dbReference type="Pfam" id="PF07992">
    <property type="entry name" value="Pyr_redox_2"/>
    <property type="match status" value="1"/>
</dbReference>
<dbReference type="PRINTS" id="PR00368">
    <property type="entry name" value="FADPNR"/>
</dbReference>
<dbReference type="PRINTS" id="PR00469">
    <property type="entry name" value="PNDRDTASEII"/>
</dbReference>
<dbReference type="SUPFAM" id="SSF51905">
    <property type="entry name" value="FAD/NAD(P)-binding domain"/>
    <property type="match status" value="1"/>
</dbReference>
<comment type="catalytic activity">
    <reaction evidence="1">
        <text>2 reduced [2Fe-2S]-[ferredoxin] + NADP(+) + H(+) = 2 oxidized [2Fe-2S]-[ferredoxin] + NADPH</text>
        <dbReference type="Rhea" id="RHEA:20125"/>
        <dbReference type="Rhea" id="RHEA-COMP:10000"/>
        <dbReference type="Rhea" id="RHEA-COMP:10001"/>
        <dbReference type="ChEBI" id="CHEBI:15378"/>
        <dbReference type="ChEBI" id="CHEBI:33737"/>
        <dbReference type="ChEBI" id="CHEBI:33738"/>
        <dbReference type="ChEBI" id="CHEBI:57783"/>
        <dbReference type="ChEBI" id="CHEBI:58349"/>
        <dbReference type="EC" id="1.18.1.2"/>
    </reaction>
</comment>
<comment type="cofactor">
    <cofactor evidence="1">
        <name>FAD</name>
        <dbReference type="ChEBI" id="CHEBI:57692"/>
    </cofactor>
    <text evidence="1">Binds 1 FAD per subunit.</text>
</comment>
<comment type="subunit">
    <text evidence="1">Homodimer.</text>
</comment>
<comment type="similarity">
    <text evidence="1">Belongs to the ferredoxin--NADP reductase type 2 family.</text>
</comment>